<protein>
    <recommendedName>
        <fullName evidence="1">Glucosamine-6-phosphate deaminase</fullName>
        <ecNumber evidence="1">3.5.99.6</ecNumber>
    </recommendedName>
    <alternativeName>
        <fullName evidence="1">GlcN6P deaminase</fullName>
        <shortName evidence="1">GNPDA</shortName>
    </alternativeName>
    <alternativeName>
        <fullName evidence="1">Glucosamine-6-phosphate isomerase</fullName>
    </alternativeName>
</protein>
<feature type="chain" id="PRO_0000160165" description="Glucosamine-6-phosphate deaminase">
    <location>
        <begin position="1"/>
        <end position="252"/>
    </location>
</feature>
<feature type="active site" description="Proton acceptor; for enolization step" evidence="1">
    <location>
        <position position="67"/>
    </location>
</feature>
<feature type="active site" description="For ring-opening step" evidence="1">
    <location>
        <position position="137"/>
    </location>
</feature>
<feature type="active site" description="Proton acceptor; for ring-opening step" evidence="1">
    <location>
        <position position="139"/>
    </location>
</feature>
<feature type="active site" description="For ring-opening step" evidence="1">
    <location>
        <position position="144"/>
    </location>
</feature>
<sequence>MKVLNLGSKKQASFYVACELYKEMAFNQHCKLGLATGGTMTDLYEQLVKLLNKNQLNVDNVSTFNLDEYVGLTASHPQSYHYYMDDMLFKQYPYFNRKNIHIPNGDAYDMNAEASTYNDVLEQQGQRDIQILGIGENGHIGFNEPGTPFDSVTHIVDLTESTIKANSRYFENEDDVPKQAISMGLANILQAKRIILLAFGEKKRAAITHLLNQEISVDVPATLLHKHPNVEIYLDDEACPKNVAKIHVDEMD</sequence>
<organism>
    <name type="scientific">Staphylococcus aureus (strain MRSA252)</name>
    <dbReference type="NCBI Taxonomy" id="282458"/>
    <lineage>
        <taxon>Bacteria</taxon>
        <taxon>Bacillati</taxon>
        <taxon>Bacillota</taxon>
        <taxon>Bacilli</taxon>
        <taxon>Bacillales</taxon>
        <taxon>Staphylococcaceae</taxon>
        <taxon>Staphylococcus</taxon>
    </lineage>
</organism>
<dbReference type="EC" id="3.5.99.6" evidence="1"/>
<dbReference type="EMBL" id="BX571856">
    <property type="protein sequence ID" value="CAG39594.1"/>
    <property type="molecule type" value="Genomic_DNA"/>
</dbReference>
<dbReference type="RefSeq" id="WP_000866426.1">
    <property type="nucleotide sequence ID" value="NC_002952.2"/>
</dbReference>
<dbReference type="SMR" id="Q6GJA0"/>
<dbReference type="KEGG" id="sar:SAR0573"/>
<dbReference type="HOGENOM" id="CLU_049611_1_1_9"/>
<dbReference type="UniPathway" id="UPA00629">
    <property type="reaction ID" value="UER00684"/>
</dbReference>
<dbReference type="Proteomes" id="UP000000596">
    <property type="component" value="Chromosome"/>
</dbReference>
<dbReference type="GO" id="GO:0005737">
    <property type="term" value="C:cytoplasm"/>
    <property type="evidence" value="ECO:0007669"/>
    <property type="project" value="TreeGrafter"/>
</dbReference>
<dbReference type="GO" id="GO:0004342">
    <property type="term" value="F:glucosamine-6-phosphate deaminase activity"/>
    <property type="evidence" value="ECO:0007669"/>
    <property type="project" value="UniProtKB-UniRule"/>
</dbReference>
<dbReference type="GO" id="GO:0042802">
    <property type="term" value="F:identical protein binding"/>
    <property type="evidence" value="ECO:0007669"/>
    <property type="project" value="TreeGrafter"/>
</dbReference>
<dbReference type="GO" id="GO:0005975">
    <property type="term" value="P:carbohydrate metabolic process"/>
    <property type="evidence" value="ECO:0007669"/>
    <property type="project" value="InterPro"/>
</dbReference>
<dbReference type="GO" id="GO:0006043">
    <property type="term" value="P:glucosamine catabolic process"/>
    <property type="evidence" value="ECO:0007669"/>
    <property type="project" value="TreeGrafter"/>
</dbReference>
<dbReference type="GO" id="GO:0006046">
    <property type="term" value="P:N-acetylglucosamine catabolic process"/>
    <property type="evidence" value="ECO:0007669"/>
    <property type="project" value="TreeGrafter"/>
</dbReference>
<dbReference type="GO" id="GO:0019262">
    <property type="term" value="P:N-acetylneuraminate catabolic process"/>
    <property type="evidence" value="ECO:0007669"/>
    <property type="project" value="UniProtKB-UniRule"/>
</dbReference>
<dbReference type="CDD" id="cd01399">
    <property type="entry name" value="GlcN6P_deaminase"/>
    <property type="match status" value="1"/>
</dbReference>
<dbReference type="FunFam" id="3.40.50.1360:FF:000003">
    <property type="entry name" value="Glucosamine-6-phosphate deaminase"/>
    <property type="match status" value="1"/>
</dbReference>
<dbReference type="Gene3D" id="3.40.50.1360">
    <property type="match status" value="1"/>
</dbReference>
<dbReference type="HAMAP" id="MF_01241">
    <property type="entry name" value="GlcN6P_deamin"/>
    <property type="match status" value="1"/>
</dbReference>
<dbReference type="InterPro" id="IPR006148">
    <property type="entry name" value="Glc/Gal-6P_isomerase"/>
</dbReference>
<dbReference type="InterPro" id="IPR004547">
    <property type="entry name" value="Glucosamine6P_isomerase"/>
</dbReference>
<dbReference type="InterPro" id="IPR018321">
    <property type="entry name" value="Glucosamine6P_isomerase_CS"/>
</dbReference>
<dbReference type="InterPro" id="IPR037171">
    <property type="entry name" value="NagB/RpiA_transferase-like"/>
</dbReference>
<dbReference type="NCBIfam" id="TIGR00502">
    <property type="entry name" value="nagB"/>
    <property type="match status" value="1"/>
</dbReference>
<dbReference type="PANTHER" id="PTHR11280">
    <property type="entry name" value="GLUCOSAMINE-6-PHOSPHATE ISOMERASE"/>
    <property type="match status" value="1"/>
</dbReference>
<dbReference type="PANTHER" id="PTHR11280:SF5">
    <property type="entry name" value="GLUCOSAMINE-6-PHOSPHATE ISOMERASE"/>
    <property type="match status" value="1"/>
</dbReference>
<dbReference type="Pfam" id="PF01182">
    <property type="entry name" value="Glucosamine_iso"/>
    <property type="match status" value="1"/>
</dbReference>
<dbReference type="SUPFAM" id="SSF100950">
    <property type="entry name" value="NagB/RpiA/CoA transferase-like"/>
    <property type="match status" value="1"/>
</dbReference>
<dbReference type="PROSITE" id="PS01161">
    <property type="entry name" value="GLC_GALNAC_ISOMERASE"/>
    <property type="match status" value="1"/>
</dbReference>
<accession>Q6GJA0</accession>
<keyword id="KW-0119">Carbohydrate metabolism</keyword>
<keyword id="KW-0378">Hydrolase</keyword>
<evidence type="ECO:0000255" key="1">
    <source>
        <dbReference type="HAMAP-Rule" id="MF_01241"/>
    </source>
</evidence>
<name>NAGB_STAAR</name>
<proteinExistence type="inferred from homology"/>
<reference key="1">
    <citation type="journal article" date="2004" name="Proc. Natl. Acad. Sci. U.S.A.">
        <title>Complete genomes of two clinical Staphylococcus aureus strains: evidence for the rapid evolution of virulence and drug resistance.</title>
        <authorList>
            <person name="Holden M.T.G."/>
            <person name="Feil E.J."/>
            <person name="Lindsay J.A."/>
            <person name="Peacock S.J."/>
            <person name="Day N.P.J."/>
            <person name="Enright M.C."/>
            <person name="Foster T.J."/>
            <person name="Moore C.E."/>
            <person name="Hurst L."/>
            <person name="Atkin R."/>
            <person name="Barron A."/>
            <person name="Bason N."/>
            <person name="Bentley S.D."/>
            <person name="Chillingworth C."/>
            <person name="Chillingworth T."/>
            <person name="Churcher C."/>
            <person name="Clark L."/>
            <person name="Corton C."/>
            <person name="Cronin A."/>
            <person name="Doggett J."/>
            <person name="Dowd L."/>
            <person name="Feltwell T."/>
            <person name="Hance Z."/>
            <person name="Harris B."/>
            <person name="Hauser H."/>
            <person name="Holroyd S."/>
            <person name="Jagels K."/>
            <person name="James K.D."/>
            <person name="Lennard N."/>
            <person name="Line A."/>
            <person name="Mayes R."/>
            <person name="Moule S."/>
            <person name="Mungall K."/>
            <person name="Ormond D."/>
            <person name="Quail M.A."/>
            <person name="Rabbinowitsch E."/>
            <person name="Rutherford K.M."/>
            <person name="Sanders M."/>
            <person name="Sharp S."/>
            <person name="Simmonds M."/>
            <person name="Stevens K."/>
            <person name="Whitehead S."/>
            <person name="Barrell B.G."/>
            <person name="Spratt B.G."/>
            <person name="Parkhill J."/>
        </authorList>
    </citation>
    <scope>NUCLEOTIDE SEQUENCE [LARGE SCALE GENOMIC DNA]</scope>
    <source>
        <strain>MRSA252</strain>
    </source>
</reference>
<comment type="function">
    <text evidence="1">Catalyzes the reversible isomerization-deamination of glucosamine 6-phosphate (GlcN6P) to form fructose 6-phosphate (Fru6P) and ammonium ion.</text>
</comment>
<comment type="catalytic activity">
    <reaction evidence="1">
        <text>alpha-D-glucosamine 6-phosphate + H2O = beta-D-fructose 6-phosphate + NH4(+)</text>
        <dbReference type="Rhea" id="RHEA:12172"/>
        <dbReference type="ChEBI" id="CHEBI:15377"/>
        <dbReference type="ChEBI" id="CHEBI:28938"/>
        <dbReference type="ChEBI" id="CHEBI:57634"/>
        <dbReference type="ChEBI" id="CHEBI:75989"/>
        <dbReference type="EC" id="3.5.99.6"/>
    </reaction>
</comment>
<comment type="pathway">
    <text evidence="1">Amino-sugar metabolism; N-acetylneuraminate degradation; D-fructose 6-phosphate from N-acetylneuraminate: step 5/5.</text>
</comment>
<comment type="similarity">
    <text evidence="1">Belongs to the glucosamine/galactosamine-6-phosphate isomerase family. NagB subfamily.</text>
</comment>
<gene>
    <name evidence="1" type="primary">nagB</name>
    <name type="ordered locus">SAR0573</name>
</gene>